<comment type="function">
    <text evidence="2">Catalyzes the reversible oxidation of 3-phospho-D-glycerate to 3-phosphonooxypyruvate, the first step of the phosphorylated L-serine biosynthesis pathway. Also catalyzes the reversible oxidation of 2-hydroxyglutarate to 2-oxoglutarate.</text>
</comment>
<comment type="catalytic activity">
    <reaction evidence="2">
        <text>(2R)-3-phosphoglycerate + NAD(+) = 3-phosphooxypyruvate + NADH + H(+)</text>
        <dbReference type="Rhea" id="RHEA:12641"/>
        <dbReference type="ChEBI" id="CHEBI:15378"/>
        <dbReference type="ChEBI" id="CHEBI:18110"/>
        <dbReference type="ChEBI" id="CHEBI:57540"/>
        <dbReference type="ChEBI" id="CHEBI:57945"/>
        <dbReference type="ChEBI" id="CHEBI:58272"/>
        <dbReference type="EC" id="1.1.1.95"/>
    </reaction>
</comment>
<comment type="catalytic activity">
    <reaction evidence="2">
        <text>(R)-2-hydroxyglutarate + NAD(+) = 2-oxoglutarate + NADH + H(+)</text>
        <dbReference type="Rhea" id="RHEA:49612"/>
        <dbReference type="ChEBI" id="CHEBI:15378"/>
        <dbReference type="ChEBI" id="CHEBI:15801"/>
        <dbReference type="ChEBI" id="CHEBI:16810"/>
        <dbReference type="ChEBI" id="CHEBI:57540"/>
        <dbReference type="ChEBI" id="CHEBI:57945"/>
        <dbReference type="EC" id="1.1.1.399"/>
    </reaction>
</comment>
<comment type="pathway">
    <text>Amino-acid biosynthesis; L-serine biosynthesis; L-serine from 3-phospho-D-glycerate: step 1/3.</text>
</comment>
<comment type="similarity">
    <text evidence="5">Belongs to the D-isomer specific 2-hydroxyacid dehydrogenase family.</text>
</comment>
<dbReference type="EC" id="1.1.1.95" evidence="2"/>
<dbReference type="EC" id="1.1.1.399" evidence="2"/>
<dbReference type="EMBL" id="AAFI02000040">
    <property type="protein sequence ID" value="EAL66832.1"/>
    <property type="molecule type" value="Genomic_DNA"/>
</dbReference>
<dbReference type="RefSeq" id="XP_640798.1">
    <property type="nucleotide sequence ID" value="XM_635706.1"/>
</dbReference>
<dbReference type="SMR" id="Q54UH8"/>
<dbReference type="FunCoup" id="Q54UH8">
    <property type="interactions" value="359"/>
</dbReference>
<dbReference type="STRING" id="44689.Q54UH8"/>
<dbReference type="PaxDb" id="44689-DDB0230052"/>
<dbReference type="EnsemblProtists" id="EAL66832">
    <property type="protein sequence ID" value="EAL66832"/>
    <property type="gene ID" value="DDB_G0281071"/>
</dbReference>
<dbReference type="GeneID" id="8622851"/>
<dbReference type="KEGG" id="ddi:DDB_G0281071"/>
<dbReference type="dictyBase" id="DDB_G0281071">
    <property type="gene designation" value="serA"/>
</dbReference>
<dbReference type="VEuPathDB" id="AmoebaDB:DDB_G0281071"/>
<dbReference type="eggNOG" id="KOG0068">
    <property type="taxonomic scope" value="Eukaryota"/>
</dbReference>
<dbReference type="HOGENOM" id="CLU_019796_9_2_1"/>
<dbReference type="InParanoid" id="Q54UH8"/>
<dbReference type="OMA" id="SKGCWEV"/>
<dbReference type="PhylomeDB" id="Q54UH8"/>
<dbReference type="UniPathway" id="UPA00135">
    <property type="reaction ID" value="UER00196"/>
</dbReference>
<dbReference type="PRO" id="PR:Q54UH8"/>
<dbReference type="Proteomes" id="UP000002195">
    <property type="component" value="Chromosome 3"/>
</dbReference>
<dbReference type="GO" id="GO:0045335">
    <property type="term" value="C:phagocytic vesicle"/>
    <property type="evidence" value="ECO:0007005"/>
    <property type="project" value="dictyBase"/>
</dbReference>
<dbReference type="GO" id="GO:0051287">
    <property type="term" value="F:NAD binding"/>
    <property type="evidence" value="ECO:0007669"/>
    <property type="project" value="InterPro"/>
</dbReference>
<dbReference type="GO" id="GO:0004617">
    <property type="term" value="F:phosphoglycerate dehydrogenase activity"/>
    <property type="evidence" value="ECO:0000250"/>
    <property type="project" value="dictyBase"/>
</dbReference>
<dbReference type="GO" id="GO:0006564">
    <property type="term" value="P:L-serine biosynthetic process"/>
    <property type="evidence" value="ECO:0007669"/>
    <property type="project" value="UniProtKB-KW"/>
</dbReference>
<dbReference type="GO" id="GO:0009070">
    <property type="term" value="P:serine family amino acid biosynthetic process"/>
    <property type="evidence" value="ECO:0000250"/>
    <property type="project" value="dictyBase"/>
</dbReference>
<dbReference type="CDD" id="cd04901">
    <property type="entry name" value="ACT_3PGDH"/>
    <property type="match status" value="1"/>
</dbReference>
<dbReference type="CDD" id="cd12176">
    <property type="entry name" value="PGDH_3"/>
    <property type="match status" value="1"/>
</dbReference>
<dbReference type="FunFam" id="3.40.50.720:FF:000041">
    <property type="entry name" value="D-3-phosphoglycerate dehydrogenase"/>
    <property type="match status" value="1"/>
</dbReference>
<dbReference type="Gene3D" id="3.30.70.260">
    <property type="match status" value="1"/>
</dbReference>
<dbReference type="Gene3D" id="3.40.50.720">
    <property type="entry name" value="NAD(P)-binding Rossmann-like Domain"/>
    <property type="match status" value="2"/>
</dbReference>
<dbReference type="InterPro" id="IPR045865">
    <property type="entry name" value="ACT-like_dom_sf"/>
</dbReference>
<dbReference type="InterPro" id="IPR002912">
    <property type="entry name" value="ACT_dom"/>
</dbReference>
<dbReference type="InterPro" id="IPR054480">
    <property type="entry name" value="AHAS_small-like_ACT"/>
</dbReference>
<dbReference type="InterPro" id="IPR050418">
    <property type="entry name" value="D-iso_2-hydroxyacid_DH_PdxB"/>
</dbReference>
<dbReference type="InterPro" id="IPR006139">
    <property type="entry name" value="D-isomer_2_OHA_DH_cat_dom"/>
</dbReference>
<dbReference type="InterPro" id="IPR029753">
    <property type="entry name" value="D-isomer_DH_CS"/>
</dbReference>
<dbReference type="InterPro" id="IPR029752">
    <property type="entry name" value="D-isomer_DH_CS1"/>
</dbReference>
<dbReference type="InterPro" id="IPR006140">
    <property type="entry name" value="D-isomer_DH_NAD-bd"/>
</dbReference>
<dbReference type="InterPro" id="IPR036291">
    <property type="entry name" value="NAD(P)-bd_dom_sf"/>
</dbReference>
<dbReference type="NCBIfam" id="NF008759">
    <property type="entry name" value="PRK11790.1"/>
    <property type="match status" value="1"/>
</dbReference>
<dbReference type="PANTHER" id="PTHR43761:SF1">
    <property type="entry name" value="D-ISOMER SPECIFIC 2-HYDROXYACID DEHYDROGENASE CATALYTIC DOMAIN-CONTAINING PROTEIN-RELATED"/>
    <property type="match status" value="1"/>
</dbReference>
<dbReference type="PANTHER" id="PTHR43761">
    <property type="entry name" value="D-ISOMER SPECIFIC 2-HYDROXYACID DEHYDROGENASE FAMILY PROTEIN (AFU_ORTHOLOGUE AFUA_1G13630)"/>
    <property type="match status" value="1"/>
</dbReference>
<dbReference type="Pfam" id="PF00389">
    <property type="entry name" value="2-Hacid_dh"/>
    <property type="match status" value="1"/>
</dbReference>
<dbReference type="Pfam" id="PF02826">
    <property type="entry name" value="2-Hacid_dh_C"/>
    <property type="match status" value="1"/>
</dbReference>
<dbReference type="Pfam" id="PF22629">
    <property type="entry name" value="ACT_AHAS_ss"/>
    <property type="match status" value="1"/>
</dbReference>
<dbReference type="SUPFAM" id="SSF55021">
    <property type="entry name" value="ACT-like"/>
    <property type="match status" value="1"/>
</dbReference>
<dbReference type="SUPFAM" id="SSF52283">
    <property type="entry name" value="Formate/glycerate dehydrogenase catalytic domain-like"/>
    <property type="match status" value="1"/>
</dbReference>
<dbReference type="SUPFAM" id="SSF51735">
    <property type="entry name" value="NAD(P)-binding Rossmann-fold domains"/>
    <property type="match status" value="1"/>
</dbReference>
<dbReference type="PROSITE" id="PS51671">
    <property type="entry name" value="ACT"/>
    <property type="match status" value="1"/>
</dbReference>
<dbReference type="PROSITE" id="PS00065">
    <property type="entry name" value="D_2_HYDROXYACID_DH_1"/>
    <property type="match status" value="1"/>
</dbReference>
<dbReference type="PROSITE" id="PS00670">
    <property type="entry name" value="D_2_HYDROXYACID_DH_2"/>
    <property type="match status" value="1"/>
</dbReference>
<gene>
    <name type="primary">serA</name>
    <name type="ORF">DDB_G0281071</name>
</gene>
<proteinExistence type="evidence at protein level"/>
<sequence length="407" mass="44749">MDPTTSFPKDKIKILLLENIHIAAIKQFEEQGFQVESISSSLPEDKIIEKIKDVHVLGLRSKTKVTEKILSEAKRLLAIGCFCIGTDQVDLIEAEKRGVPVFNSPFCNSRSVAELIICEIITLSRKLGDRSTEMHNKIWRKESANCHEIRGKTLGIIGYGHIGSQLSVLAEAMGMSVLYYDIARRLPLGNSKMCPDMKTLLENSNFVTLHVPDTKETVGLIGEEEINTMKKGSYLLNASRGKVVQIPHLANALRSGHLAGAAVDVYPEEPSANCKDWECELQKCPNTILTPHIGGSTEEAQEAIGLEVSDLIVQFINSGASAGSVNFPEIALPVSPSTHRILNIHNNKPGVLRDINNILSEFNVSAQVLSTRKQIGYIIADVDSEASKEIKKKISSLPNSIKTRVLY</sequence>
<organism>
    <name type="scientific">Dictyostelium discoideum</name>
    <name type="common">Social amoeba</name>
    <dbReference type="NCBI Taxonomy" id="44689"/>
    <lineage>
        <taxon>Eukaryota</taxon>
        <taxon>Amoebozoa</taxon>
        <taxon>Evosea</taxon>
        <taxon>Eumycetozoa</taxon>
        <taxon>Dictyostelia</taxon>
        <taxon>Dictyosteliales</taxon>
        <taxon>Dictyosteliaceae</taxon>
        <taxon>Dictyostelium</taxon>
    </lineage>
</organism>
<accession>Q54UH8</accession>
<name>SERA_DICDI</name>
<protein>
    <recommendedName>
        <fullName>D-3-phosphoglycerate dehydrogenase</fullName>
        <shortName>3-PGDH</shortName>
        <ecNumber evidence="2">1.1.1.95</ecNumber>
    </recommendedName>
    <alternativeName>
        <fullName evidence="5">2-oxoglutarate reductase</fullName>
        <ecNumber evidence="2">1.1.1.399</ecNumber>
    </alternativeName>
</protein>
<evidence type="ECO:0000250" key="1"/>
<evidence type="ECO:0000250" key="2">
    <source>
        <dbReference type="UniProtKB" id="O43175"/>
    </source>
</evidence>
<evidence type="ECO:0000250" key="3">
    <source>
        <dbReference type="UniProtKB" id="P0A9T0"/>
    </source>
</evidence>
<evidence type="ECO:0000255" key="4">
    <source>
        <dbReference type="PROSITE-ProRule" id="PRU01007"/>
    </source>
</evidence>
<evidence type="ECO:0000305" key="5"/>
<feature type="chain" id="PRO_0000328330" description="D-3-phosphoglycerate dehydrogenase">
    <location>
        <begin position="1"/>
        <end position="407"/>
    </location>
</feature>
<feature type="domain" description="ACT" evidence="4">
    <location>
        <begin position="340"/>
        <end position="407"/>
    </location>
</feature>
<feature type="active site" evidence="1">
    <location>
        <position position="240"/>
    </location>
</feature>
<feature type="active site" evidence="1">
    <location>
        <position position="269"/>
    </location>
</feature>
<feature type="active site" description="Proton donor" evidence="1">
    <location>
        <position position="292"/>
    </location>
</feature>
<feature type="binding site" evidence="3">
    <location>
        <begin position="161"/>
        <end position="162"/>
    </location>
    <ligand>
        <name>NAD(+)</name>
        <dbReference type="ChEBI" id="CHEBI:57540"/>
    </ligand>
</feature>
<feature type="binding site" evidence="3">
    <location>
        <position position="181"/>
    </location>
    <ligand>
        <name>NAD(+)</name>
        <dbReference type="ChEBI" id="CHEBI:57540"/>
    </ligand>
</feature>
<feature type="binding site" evidence="3">
    <location>
        <begin position="238"/>
        <end position="240"/>
    </location>
    <ligand>
        <name>NAD(+)</name>
        <dbReference type="ChEBI" id="CHEBI:57540"/>
    </ligand>
</feature>
<feature type="binding site" evidence="3">
    <location>
        <position position="264"/>
    </location>
    <ligand>
        <name>NAD(+)</name>
        <dbReference type="ChEBI" id="CHEBI:57540"/>
    </ligand>
</feature>
<feature type="binding site" evidence="3">
    <location>
        <begin position="292"/>
        <end position="295"/>
    </location>
    <ligand>
        <name>NAD(+)</name>
        <dbReference type="ChEBI" id="CHEBI:57540"/>
    </ligand>
</feature>
<reference key="1">
    <citation type="journal article" date="2005" name="Nature">
        <title>The genome of the social amoeba Dictyostelium discoideum.</title>
        <authorList>
            <person name="Eichinger L."/>
            <person name="Pachebat J.A."/>
            <person name="Gloeckner G."/>
            <person name="Rajandream M.A."/>
            <person name="Sucgang R."/>
            <person name="Berriman M."/>
            <person name="Song J."/>
            <person name="Olsen R."/>
            <person name="Szafranski K."/>
            <person name="Xu Q."/>
            <person name="Tunggal B."/>
            <person name="Kummerfeld S."/>
            <person name="Madera M."/>
            <person name="Konfortov B.A."/>
            <person name="Rivero F."/>
            <person name="Bankier A.T."/>
            <person name="Lehmann R."/>
            <person name="Hamlin N."/>
            <person name="Davies R."/>
            <person name="Gaudet P."/>
            <person name="Fey P."/>
            <person name="Pilcher K."/>
            <person name="Chen G."/>
            <person name="Saunders D."/>
            <person name="Sodergren E.J."/>
            <person name="Davis P."/>
            <person name="Kerhornou A."/>
            <person name="Nie X."/>
            <person name="Hall N."/>
            <person name="Anjard C."/>
            <person name="Hemphill L."/>
            <person name="Bason N."/>
            <person name="Farbrother P."/>
            <person name="Desany B."/>
            <person name="Just E."/>
            <person name="Morio T."/>
            <person name="Rost R."/>
            <person name="Churcher C.M."/>
            <person name="Cooper J."/>
            <person name="Haydock S."/>
            <person name="van Driessche N."/>
            <person name="Cronin A."/>
            <person name="Goodhead I."/>
            <person name="Muzny D.M."/>
            <person name="Mourier T."/>
            <person name="Pain A."/>
            <person name="Lu M."/>
            <person name="Harper D."/>
            <person name="Lindsay R."/>
            <person name="Hauser H."/>
            <person name="James K.D."/>
            <person name="Quiles M."/>
            <person name="Madan Babu M."/>
            <person name="Saito T."/>
            <person name="Buchrieser C."/>
            <person name="Wardroper A."/>
            <person name="Felder M."/>
            <person name="Thangavelu M."/>
            <person name="Johnson D."/>
            <person name="Knights A."/>
            <person name="Loulseged H."/>
            <person name="Mungall K.L."/>
            <person name="Oliver K."/>
            <person name="Price C."/>
            <person name="Quail M.A."/>
            <person name="Urushihara H."/>
            <person name="Hernandez J."/>
            <person name="Rabbinowitsch E."/>
            <person name="Steffen D."/>
            <person name="Sanders M."/>
            <person name="Ma J."/>
            <person name="Kohara Y."/>
            <person name="Sharp S."/>
            <person name="Simmonds M.N."/>
            <person name="Spiegler S."/>
            <person name="Tivey A."/>
            <person name="Sugano S."/>
            <person name="White B."/>
            <person name="Walker D."/>
            <person name="Woodward J.R."/>
            <person name="Winckler T."/>
            <person name="Tanaka Y."/>
            <person name="Shaulsky G."/>
            <person name="Schleicher M."/>
            <person name="Weinstock G.M."/>
            <person name="Rosenthal A."/>
            <person name="Cox E.C."/>
            <person name="Chisholm R.L."/>
            <person name="Gibbs R.A."/>
            <person name="Loomis W.F."/>
            <person name="Platzer M."/>
            <person name="Kay R.R."/>
            <person name="Williams J.G."/>
            <person name="Dear P.H."/>
            <person name="Noegel A.A."/>
            <person name="Barrell B.G."/>
            <person name="Kuspa A."/>
        </authorList>
    </citation>
    <scope>NUCLEOTIDE SEQUENCE [LARGE SCALE GENOMIC DNA]</scope>
    <source>
        <strain>AX4</strain>
    </source>
</reference>
<reference key="2">
    <citation type="journal article" date="2006" name="Mol. Cell. Proteomics">
        <title>Proteomics fingerprinting of phagosome maturation and evidence for the role of a Galpha during uptake.</title>
        <authorList>
            <person name="Gotthardt D."/>
            <person name="Blancheteau V."/>
            <person name="Bosserhoff A."/>
            <person name="Ruppert T."/>
            <person name="Delorenzi M."/>
            <person name="Soldati T."/>
        </authorList>
    </citation>
    <scope>IDENTIFICATION BY MASS SPECTROMETRY [LARGE SCALE ANALYSIS]</scope>
    <source>
        <strain>AX2</strain>
    </source>
</reference>
<keyword id="KW-0028">Amino-acid biosynthesis</keyword>
<keyword id="KW-0520">NAD</keyword>
<keyword id="KW-0560">Oxidoreductase</keyword>
<keyword id="KW-1185">Reference proteome</keyword>
<keyword id="KW-0718">Serine biosynthesis</keyword>